<reference key="1">
    <citation type="submission" date="2007-11" db="EMBL/GenBank/DDBJ databases">
        <authorList>
            <consortium name="The Salmonella enterica serovar Paratyphi B Genome Sequencing Project"/>
            <person name="McClelland M."/>
            <person name="Sanderson E.K."/>
            <person name="Porwollik S."/>
            <person name="Spieth J."/>
            <person name="Clifton W.S."/>
            <person name="Fulton R."/>
            <person name="Cordes M."/>
            <person name="Wollam A."/>
            <person name="Shah N."/>
            <person name="Pepin K."/>
            <person name="Bhonagiri V."/>
            <person name="Nash W."/>
            <person name="Johnson M."/>
            <person name="Thiruvilangam P."/>
            <person name="Wilson R."/>
        </authorList>
    </citation>
    <scope>NUCLEOTIDE SEQUENCE [LARGE SCALE GENOMIC DNA]</scope>
    <source>
        <strain>ATCC BAA-1250 / SPB7</strain>
    </source>
</reference>
<keyword id="KW-0028">Amino-acid biosynthesis</keyword>
<keyword id="KW-0057">Aromatic amino acid biosynthesis</keyword>
<keyword id="KW-0963">Cytoplasm</keyword>
<keyword id="KW-0808">Transferase</keyword>
<feature type="chain" id="PRO_1000077996" description="3-phosphoshikimate 1-carboxyvinyltransferase">
    <location>
        <begin position="1"/>
        <end position="427"/>
    </location>
</feature>
<feature type="active site" description="Proton acceptor" evidence="1">
    <location>
        <position position="313"/>
    </location>
</feature>
<feature type="binding site" evidence="1">
    <location>
        <position position="22"/>
    </location>
    <ligand>
        <name>3-phosphoshikimate</name>
        <dbReference type="ChEBI" id="CHEBI:145989"/>
    </ligand>
</feature>
<feature type="binding site" evidence="1">
    <location>
        <position position="22"/>
    </location>
    <ligand>
        <name>phosphoenolpyruvate</name>
        <dbReference type="ChEBI" id="CHEBI:58702"/>
    </ligand>
</feature>
<feature type="binding site" evidence="1">
    <location>
        <position position="23"/>
    </location>
    <ligand>
        <name>3-phosphoshikimate</name>
        <dbReference type="ChEBI" id="CHEBI:145989"/>
    </ligand>
</feature>
<feature type="binding site" evidence="1">
    <location>
        <position position="27"/>
    </location>
    <ligand>
        <name>3-phosphoshikimate</name>
        <dbReference type="ChEBI" id="CHEBI:145989"/>
    </ligand>
</feature>
<feature type="binding site" evidence="1">
    <location>
        <position position="96"/>
    </location>
    <ligand>
        <name>phosphoenolpyruvate</name>
        <dbReference type="ChEBI" id="CHEBI:58702"/>
    </ligand>
</feature>
<feature type="binding site" evidence="1">
    <location>
        <position position="124"/>
    </location>
    <ligand>
        <name>phosphoenolpyruvate</name>
        <dbReference type="ChEBI" id="CHEBI:58702"/>
    </ligand>
</feature>
<feature type="binding site" evidence="1">
    <location>
        <position position="169"/>
    </location>
    <ligand>
        <name>3-phosphoshikimate</name>
        <dbReference type="ChEBI" id="CHEBI:145989"/>
    </ligand>
</feature>
<feature type="binding site" evidence="1">
    <location>
        <position position="170"/>
    </location>
    <ligand>
        <name>3-phosphoshikimate</name>
        <dbReference type="ChEBI" id="CHEBI:145989"/>
    </ligand>
</feature>
<feature type="binding site" evidence="1">
    <location>
        <position position="171"/>
    </location>
    <ligand>
        <name>3-phosphoshikimate</name>
        <dbReference type="ChEBI" id="CHEBI:145989"/>
    </ligand>
</feature>
<feature type="binding site" evidence="1">
    <location>
        <position position="171"/>
    </location>
    <ligand>
        <name>phosphoenolpyruvate</name>
        <dbReference type="ChEBI" id="CHEBI:58702"/>
    </ligand>
</feature>
<feature type="binding site" evidence="1">
    <location>
        <position position="197"/>
    </location>
    <ligand>
        <name>3-phosphoshikimate</name>
        <dbReference type="ChEBI" id="CHEBI:145989"/>
    </ligand>
</feature>
<feature type="binding site" evidence="1">
    <location>
        <position position="313"/>
    </location>
    <ligand>
        <name>3-phosphoshikimate</name>
        <dbReference type="ChEBI" id="CHEBI:145989"/>
    </ligand>
</feature>
<feature type="binding site" evidence="1">
    <location>
        <position position="336"/>
    </location>
    <ligand>
        <name>3-phosphoshikimate</name>
        <dbReference type="ChEBI" id="CHEBI:145989"/>
    </ligand>
</feature>
<feature type="binding site" evidence="1">
    <location>
        <position position="340"/>
    </location>
    <ligand>
        <name>3-phosphoshikimate</name>
        <dbReference type="ChEBI" id="CHEBI:145989"/>
    </ligand>
</feature>
<feature type="binding site" evidence="1">
    <location>
        <position position="344"/>
    </location>
    <ligand>
        <name>phosphoenolpyruvate</name>
        <dbReference type="ChEBI" id="CHEBI:58702"/>
    </ligand>
</feature>
<feature type="binding site" evidence="1">
    <location>
        <position position="386"/>
    </location>
    <ligand>
        <name>phosphoenolpyruvate</name>
        <dbReference type="ChEBI" id="CHEBI:58702"/>
    </ligand>
</feature>
<feature type="binding site" evidence="1">
    <location>
        <position position="411"/>
    </location>
    <ligand>
        <name>phosphoenolpyruvate</name>
        <dbReference type="ChEBI" id="CHEBI:58702"/>
    </ligand>
</feature>
<name>AROA_SALPB</name>
<evidence type="ECO:0000255" key="1">
    <source>
        <dbReference type="HAMAP-Rule" id="MF_00210"/>
    </source>
</evidence>
<accession>A9N7V6</accession>
<protein>
    <recommendedName>
        <fullName evidence="1">3-phosphoshikimate 1-carboxyvinyltransferase</fullName>
        <ecNumber evidence="1">2.5.1.19</ecNumber>
    </recommendedName>
    <alternativeName>
        <fullName evidence="1">5-enolpyruvylshikimate-3-phosphate synthase</fullName>
        <shortName evidence="1">EPSP synthase</shortName>
        <shortName evidence="1">EPSPS</shortName>
    </alternativeName>
</protein>
<proteinExistence type="inferred from homology"/>
<organism>
    <name type="scientific">Salmonella paratyphi B (strain ATCC BAA-1250 / SPB7)</name>
    <dbReference type="NCBI Taxonomy" id="1016998"/>
    <lineage>
        <taxon>Bacteria</taxon>
        <taxon>Pseudomonadati</taxon>
        <taxon>Pseudomonadota</taxon>
        <taxon>Gammaproteobacteria</taxon>
        <taxon>Enterobacterales</taxon>
        <taxon>Enterobacteriaceae</taxon>
        <taxon>Salmonella</taxon>
    </lineage>
</organism>
<sequence length="427" mass="46160">MESLTLQPIARVDGAINLPGSKSVSNRALLLAALACGKTVLTNLLDSDDVRHMLNALSALGINYTLSADRTRCDITGNGGALRAPGALELFLGNAGTAMRPLAAALCLGQNEIVLTGEPRMKERPIGHLVDSLRQGGANIDYLEQENYPPLRLRGGFTGGDIEVDGSVSSQFLTALLMTAPLAPKDTIIRVKGELVSKPYIDITLNLMKTFGVEIANHHYQQFVVKGGQQYHSPGRYLVEGDASSASYFLAAGAIKGGTVKVTGIGRKSMQGDIRFADVLEKMGATITWGDDFIACTRGELHAIDMDMNHIPDAAMTIATTALFAKGTTTLRNIYNWRVKETDRLFAMATELRKVGAEVEEGHDYIRITPPAKLQHADIGTYNDHRMAMCFSLVALSDTPVTILDPKCTAKTFPDYFEQLARMSTPA</sequence>
<gene>
    <name evidence="1" type="primary">aroA</name>
    <name type="ordered locus">SPAB_02538</name>
</gene>
<comment type="function">
    <text evidence="1">Catalyzes the transfer of the enolpyruvyl moiety of phosphoenolpyruvate (PEP) to the 5-hydroxyl of shikimate-3-phosphate (S3P) to produce enolpyruvyl shikimate-3-phosphate and inorganic phosphate.</text>
</comment>
<comment type="catalytic activity">
    <reaction evidence="1">
        <text>3-phosphoshikimate + phosphoenolpyruvate = 5-O-(1-carboxyvinyl)-3-phosphoshikimate + phosphate</text>
        <dbReference type="Rhea" id="RHEA:21256"/>
        <dbReference type="ChEBI" id="CHEBI:43474"/>
        <dbReference type="ChEBI" id="CHEBI:57701"/>
        <dbReference type="ChEBI" id="CHEBI:58702"/>
        <dbReference type="ChEBI" id="CHEBI:145989"/>
        <dbReference type="EC" id="2.5.1.19"/>
    </reaction>
    <physiologicalReaction direction="left-to-right" evidence="1">
        <dbReference type="Rhea" id="RHEA:21257"/>
    </physiologicalReaction>
</comment>
<comment type="pathway">
    <text evidence="1">Metabolic intermediate biosynthesis; chorismate biosynthesis; chorismate from D-erythrose 4-phosphate and phosphoenolpyruvate: step 6/7.</text>
</comment>
<comment type="subunit">
    <text evidence="1">Monomer.</text>
</comment>
<comment type="subcellular location">
    <subcellularLocation>
        <location evidence="1">Cytoplasm</location>
    </subcellularLocation>
</comment>
<comment type="similarity">
    <text evidence="1">Belongs to the EPSP synthase family.</text>
</comment>
<dbReference type="EC" id="2.5.1.19" evidence="1"/>
<dbReference type="EMBL" id="CP000886">
    <property type="protein sequence ID" value="ABX67918.1"/>
    <property type="molecule type" value="Genomic_DNA"/>
</dbReference>
<dbReference type="RefSeq" id="WP_000445191.1">
    <property type="nucleotide sequence ID" value="NC_010102.1"/>
</dbReference>
<dbReference type="SMR" id="A9N7V6"/>
<dbReference type="KEGG" id="spq:SPAB_02538"/>
<dbReference type="PATRIC" id="fig|1016998.12.peg.2404"/>
<dbReference type="HOGENOM" id="CLU_024321_0_0_6"/>
<dbReference type="BioCyc" id="SENT1016998:SPAB_RS10315-MONOMER"/>
<dbReference type="UniPathway" id="UPA00053">
    <property type="reaction ID" value="UER00089"/>
</dbReference>
<dbReference type="Proteomes" id="UP000008556">
    <property type="component" value="Chromosome"/>
</dbReference>
<dbReference type="GO" id="GO:0005737">
    <property type="term" value="C:cytoplasm"/>
    <property type="evidence" value="ECO:0007669"/>
    <property type="project" value="UniProtKB-SubCell"/>
</dbReference>
<dbReference type="GO" id="GO:0003866">
    <property type="term" value="F:3-phosphoshikimate 1-carboxyvinyltransferase activity"/>
    <property type="evidence" value="ECO:0007669"/>
    <property type="project" value="UniProtKB-UniRule"/>
</dbReference>
<dbReference type="GO" id="GO:0008652">
    <property type="term" value="P:amino acid biosynthetic process"/>
    <property type="evidence" value="ECO:0007669"/>
    <property type="project" value="UniProtKB-KW"/>
</dbReference>
<dbReference type="GO" id="GO:0009073">
    <property type="term" value="P:aromatic amino acid family biosynthetic process"/>
    <property type="evidence" value="ECO:0007669"/>
    <property type="project" value="UniProtKB-KW"/>
</dbReference>
<dbReference type="GO" id="GO:0009423">
    <property type="term" value="P:chorismate biosynthetic process"/>
    <property type="evidence" value="ECO:0007669"/>
    <property type="project" value="UniProtKB-UniRule"/>
</dbReference>
<dbReference type="FunFam" id="3.65.10.10:FF:000003">
    <property type="entry name" value="3-phosphoshikimate 1-carboxyvinyltransferase"/>
    <property type="match status" value="1"/>
</dbReference>
<dbReference type="FunFam" id="3.65.10.10:FF:000004">
    <property type="entry name" value="3-phosphoshikimate 1-carboxyvinyltransferase"/>
    <property type="match status" value="1"/>
</dbReference>
<dbReference type="Gene3D" id="3.65.10.10">
    <property type="entry name" value="Enolpyruvate transferase domain"/>
    <property type="match status" value="2"/>
</dbReference>
<dbReference type="HAMAP" id="MF_00210">
    <property type="entry name" value="EPSP_synth"/>
    <property type="match status" value="1"/>
</dbReference>
<dbReference type="InterPro" id="IPR001986">
    <property type="entry name" value="Enolpyruvate_Tfrase_dom"/>
</dbReference>
<dbReference type="InterPro" id="IPR036968">
    <property type="entry name" value="Enolpyruvate_Tfrase_sf"/>
</dbReference>
<dbReference type="InterPro" id="IPR006264">
    <property type="entry name" value="EPSP_synthase"/>
</dbReference>
<dbReference type="InterPro" id="IPR023193">
    <property type="entry name" value="EPSP_synthase_CS"/>
</dbReference>
<dbReference type="InterPro" id="IPR013792">
    <property type="entry name" value="RNA3'P_cycl/enolpyr_Trfase_a/b"/>
</dbReference>
<dbReference type="NCBIfam" id="TIGR01356">
    <property type="entry name" value="aroA"/>
    <property type="match status" value="1"/>
</dbReference>
<dbReference type="PANTHER" id="PTHR21090">
    <property type="entry name" value="AROM/DEHYDROQUINATE SYNTHASE"/>
    <property type="match status" value="1"/>
</dbReference>
<dbReference type="PANTHER" id="PTHR21090:SF5">
    <property type="entry name" value="PENTAFUNCTIONAL AROM POLYPEPTIDE"/>
    <property type="match status" value="1"/>
</dbReference>
<dbReference type="Pfam" id="PF00275">
    <property type="entry name" value="EPSP_synthase"/>
    <property type="match status" value="1"/>
</dbReference>
<dbReference type="PIRSF" id="PIRSF000505">
    <property type="entry name" value="EPSPS"/>
    <property type="match status" value="1"/>
</dbReference>
<dbReference type="SUPFAM" id="SSF55205">
    <property type="entry name" value="EPT/RTPC-like"/>
    <property type="match status" value="1"/>
</dbReference>
<dbReference type="PROSITE" id="PS00104">
    <property type="entry name" value="EPSP_SYNTHASE_1"/>
    <property type="match status" value="1"/>
</dbReference>
<dbReference type="PROSITE" id="PS00885">
    <property type="entry name" value="EPSP_SYNTHASE_2"/>
    <property type="match status" value="1"/>
</dbReference>